<feature type="chain" id="PRO_0000240899" description="Cysteine--tRNA ligase">
    <location>
        <begin position="1"/>
        <end position="465"/>
    </location>
</feature>
<feature type="short sequence motif" description="'HIGH' region">
    <location>
        <begin position="29"/>
        <end position="39"/>
    </location>
</feature>
<feature type="short sequence motif" description="'KMSKS' region">
    <location>
        <begin position="264"/>
        <end position="268"/>
    </location>
</feature>
<feature type="binding site" evidence="1">
    <location>
        <position position="27"/>
    </location>
    <ligand>
        <name>Zn(2+)</name>
        <dbReference type="ChEBI" id="CHEBI:29105"/>
    </ligand>
</feature>
<feature type="binding site" evidence="1">
    <location>
        <position position="207"/>
    </location>
    <ligand>
        <name>Zn(2+)</name>
        <dbReference type="ChEBI" id="CHEBI:29105"/>
    </ligand>
</feature>
<feature type="binding site" evidence="1">
    <location>
        <position position="232"/>
    </location>
    <ligand>
        <name>Zn(2+)</name>
        <dbReference type="ChEBI" id="CHEBI:29105"/>
    </ligand>
</feature>
<feature type="binding site" evidence="1">
    <location>
        <position position="236"/>
    </location>
    <ligand>
        <name>Zn(2+)</name>
        <dbReference type="ChEBI" id="CHEBI:29105"/>
    </ligand>
</feature>
<feature type="binding site" evidence="1">
    <location>
        <position position="267"/>
    </location>
    <ligand>
        <name>ATP</name>
        <dbReference type="ChEBI" id="CHEBI:30616"/>
    </ligand>
</feature>
<accession>Q3A9P1</accession>
<keyword id="KW-0030">Aminoacyl-tRNA synthetase</keyword>
<keyword id="KW-0067">ATP-binding</keyword>
<keyword id="KW-0963">Cytoplasm</keyword>
<keyword id="KW-0436">Ligase</keyword>
<keyword id="KW-0479">Metal-binding</keyword>
<keyword id="KW-0547">Nucleotide-binding</keyword>
<keyword id="KW-0648">Protein biosynthesis</keyword>
<keyword id="KW-1185">Reference proteome</keyword>
<keyword id="KW-0862">Zinc</keyword>
<name>SYC_CARHZ</name>
<comment type="catalytic activity">
    <reaction evidence="1">
        <text>tRNA(Cys) + L-cysteine + ATP = L-cysteinyl-tRNA(Cys) + AMP + diphosphate</text>
        <dbReference type="Rhea" id="RHEA:17773"/>
        <dbReference type="Rhea" id="RHEA-COMP:9661"/>
        <dbReference type="Rhea" id="RHEA-COMP:9679"/>
        <dbReference type="ChEBI" id="CHEBI:30616"/>
        <dbReference type="ChEBI" id="CHEBI:33019"/>
        <dbReference type="ChEBI" id="CHEBI:35235"/>
        <dbReference type="ChEBI" id="CHEBI:78442"/>
        <dbReference type="ChEBI" id="CHEBI:78517"/>
        <dbReference type="ChEBI" id="CHEBI:456215"/>
        <dbReference type="EC" id="6.1.1.16"/>
    </reaction>
</comment>
<comment type="cofactor">
    <cofactor evidence="1">
        <name>Zn(2+)</name>
        <dbReference type="ChEBI" id="CHEBI:29105"/>
    </cofactor>
    <text evidence="1">Binds 1 zinc ion per subunit.</text>
</comment>
<comment type="subunit">
    <text evidence="1">Monomer.</text>
</comment>
<comment type="subcellular location">
    <subcellularLocation>
        <location evidence="1">Cytoplasm</location>
    </subcellularLocation>
</comment>
<comment type="similarity">
    <text evidence="1">Belongs to the class-I aminoacyl-tRNA synthetase family.</text>
</comment>
<dbReference type="EC" id="6.1.1.16" evidence="1"/>
<dbReference type="EMBL" id="CP000141">
    <property type="protein sequence ID" value="ABB15943.1"/>
    <property type="molecule type" value="Genomic_DNA"/>
</dbReference>
<dbReference type="RefSeq" id="WP_011345216.1">
    <property type="nucleotide sequence ID" value="NC_007503.1"/>
</dbReference>
<dbReference type="SMR" id="Q3A9P1"/>
<dbReference type="FunCoup" id="Q3A9P1">
    <property type="interactions" value="364"/>
</dbReference>
<dbReference type="STRING" id="246194.CHY_2338"/>
<dbReference type="KEGG" id="chy:CHY_2338"/>
<dbReference type="eggNOG" id="COG0215">
    <property type="taxonomic scope" value="Bacteria"/>
</dbReference>
<dbReference type="HOGENOM" id="CLU_013528_0_1_9"/>
<dbReference type="InParanoid" id="Q3A9P1"/>
<dbReference type="OrthoDB" id="9815130at2"/>
<dbReference type="Proteomes" id="UP000002706">
    <property type="component" value="Chromosome"/>
</dbReference>
<dbReference type="GO" id="GO:0005829">
    <property type="term" value="C:cytosol"/>
    <property type="evidence" value="ECO:0007669"/>
    <property type="project" value="TreeGrafter"/>
</dbReference>
<dbReference type="GO" id="GO:0005524">
    <property type="term" value="F:ATP binding"/>
    <property type="evidence" value="ECO:0007669"/>
    <property type="project" value="UniProtKB-UniRule"/>
</dbReference>
<dbReference type="GO" id="GO:0004817">
    <property type="term" value="F:cysteine-tRNA ligase activity"/>
    <property type="evidence" value="ECO:0007669"/>
    <property type="project" value="UniProtKB-UniRule"/>
</dbReference>
<dbReference type="GO" id="GO:0008270">
    <property type="term" value="F:zinc ion binding"/>
    <property type="evidence" value="ECO:0007669"/>
    <property type="project" value="UniProtKB-UniRule"/>
</dbReference>
<dbReference type="GO" id="GO:0006423">
    <property type="term" value="P:cysteinyl-tRNA aminoacylation"/>
    <property type="evidence" value="ECO:0007669"/>
    <property type="project" value="UniProtKB-UniRule"/>
</dbReference>
<dbReference type="CDD" id="cd00672">
    <property type="entry name" value="CysRS_core"/>
    <property type="match status" value="1"/>
</dbReference>
<dbReference type="FunFam" id="3.40.50.620:FF:000009">
    <property type="entry name" value="Cysteine--tRNA ligase"/>
    <property type="match status" value="1"/>
</dbReference>
<dbReference type="Gene3D" id="1.20.120.1910">
    <property type="entry name" value="Cysteine-tRNA ligase, C-terminal anti-codon recognition domain"/>
    <property type="match status" value="1"/>
</dbReference>
<dbReference type="Gene3D" id="3.40.50.620">
    <property type="entry name" value="HUPs"/>
    <property type="match status" value="1"/>
</dbReference>
<dbReference type="HAMAP" id="MF_00041">
    <property type="entry name" value="Cys_tRNA_synth"/>
    <property type="match status" value="1"/>
</dbReference>
<dbReference type="InterPro" id="IPR015803">
    <property type="entry name" value="Cys-tRNA-ligase"/>
</dbReference>
<dbReference type="InterPro" id="IPR015273">
    <property type="entry name" value="Cys-tRNA-synt_Ia_DALR"/>
</dbReference>
<dbReference type="InterPro" id="IPR024909">
    <property type="entry name" value="Cys-tRNA/MSH_ligase"/>
</dbReference>
<dbReference type="InterPro" id="IPR014729">
    <property type="entry name" value="Rossmann-like_a/b/a_fold"/>
</dbReference>
<dbReference type="InterPro" id="IPR032678">
    <property type="entry name" value="tRNA-synt_1_cat_dom"/>
</dbReference>
<dbReference type="InterPro" id="IPR009080">
    <property type="entry name" value="tRNAsynth_Ia_anticodon-bd"/>
</dbReference>
<dbReference type="NCBIfam" id="TIGR00435">
    <property type="entry name" value="cysS"/>
    <property type="match status" value="1"/>
</dbReference>
<dbReference type="PANTHER" id="PTHR10890:SF3">
    <property type="entry name" value="CYSTEINE--TRNA LIGASE, CYTOPLASMIC"/>
    <property type="match status" value="1"/>
</dbReference>
<dbReference type="PANTHER" id="PTHR10890">
    <property type="entry name" value="CYSTEINYL-TRNA SYNTHETASE"/>
    <property type="match status" value="1"/>
</dbReference>
<dbReference type="Pfam" id="PF09190">
    <property type="entry name" value="DALR_2"/>
    <property type="match status" value="1"/>
</dbReference>
<dbReference type="Pfam" id="PF01406">
    <property type="entry name" value="tRNA-synt_1e"/>
    <property type="match status" value="1"/>
</dbReference>
<dbReference type="PRINTS" id="PR00983">
    <property type="entry name" value="TRNASYNTHCYS"/>
</dbReference>
<dbReference type="SMART" id="SM00840">
    <property type="entry name" value="DALR_2"/>
    <property type="match status" value="1"/>
</dbReference>
<dbReference type="SUPFAM" id="SSF47323">
    <property type="entry name" value="Anticodon-binding domain of a subclass of class I aminoacyl-tRNA synthetases"/>
    <property type="match status" value="1"/>
</dbReference>
<dbReference type="SUPFAM" id="SSF52374">
    <property type="entry name" value="Nucleotidylyl transferase"/>
    <property type="match status" value="1"/>
</dbReference>
<gene>
    <name evidence="1" type="primary">cysS</name>
    <name type="ordered locus">CHY_2338</name>
</gene>
<protein>
    <recommendedName>
        <fullName evidence="1">Cysteine--tRNA ligase</fullName>
        <ecNumber evidence="1">6.1.1.16</ecNumber>
    </recommendedName>
    <alternativeName>
        <fullName evidence="1">Cysteinyl-tRNA synthetase</fullName>
        <shortName evidence="1">CysRS</shortName>
    </alternativeName>
</protein>
<organism>
    <name type="scientific">Carboxydothermus hydrogenoformans (strain ATCC BAA-161 / DSM 6008 / Z-2901)</name>
    <dbReference type="NCBI Taxonomy" id="246194"/>
    <lineage>
        <taxon>Bacteria</taxon>
        <taxon>Bacillati</taxon>
        <taxon>Bacillota</taxon>
        <taxon>Clostridia</taxon>
        <taxon>Thermoanaerobacterales</taxon>
        <taxon>Thermoanaerobacteraceae</taxon>
        <taxon>Carboxydothermus</taxon>
    </lineage>
</organism>
<proteinExistence type="inferred from homology"/>
<evidence type="ECO:0000255" key="1">
    <source>
        <dbReference type="HAMAP-Rule" id="MF_00041"/>
    </source>
</evidence>
<reference key="1">
    <citation type="journal article" date="2005" name="PLoS Genet.">
        <title>Life in hot carbon monoxide: the complete genome sequence of Carboxydothermus hydrogenoformans Z-2901.</title>
        <authorList>
            <person name="Wu M."/>
            <person name="Ren Q."/>
            <person name="Durkin A.S."/>
            <person name="Daugherty S.C."/>
            <person name="Brinkac L.M."/>
            <person name="Dodson R.J."/>
            <person name="Madupu R."/>
            <person name="Sullivan S.A."/>
            <person name="Kolonay J.F."/>
            <person name="Nelson W.C."/>
            <person name="Tallon L.J."/>
            <person name="Jones K.M."/>
            <person name="Ulrich L.E."/>
            <person name="Gonzalez J.M."/>
            <person name="Zhulin I.B."/>
            <person name="Robb F.T."/>
            <person name="Eisen J.A."/>
        </authorList>
    </citation>
    <scope>NUCLEOTIDE SEQUENCE [LARGE SCALE GENOMIC DNA]</scope>
    <source>
        <strain>ATCC BAA-161 / DSM 6008 / Z-2901</strain>
    </source>
</reference>
<sequence>MKIYNTLTKTKEEFIPREPGKVYMYVCGPTTYNYIHIGNARPIVFFDTVRRYFEYKGFEVIYVQNFTDIDDKIINRALEEGISPIELGQKYIIEYFKDADRLGVKRATVHPKVTEHIPEIIEMVKGLIEKGYAYEVEGNVYFAVDSFSDYGKLSGRDLEELKAGARVEVDEKKKNPLDFALWKKAKPGEPYWESPWGPGRPGWHIECSAMSLKYLGENFDIHGGGADLVFPHHENEVAQSEAFTGKPFARYWMHNGFITVNQEKMSKSLGNFFLVREILEKFPGRVVRFFLLSTHYRSPLDFDDKKLNEAKAALERVDNFVQNLKEVNPLPGEARIEIQEKITNFLRDFNEAMEDDFNTAQAMASLFELVRFGNTQIASGNLTAGDKKLFEEALNVYTQVFGIEFGVLEKIAGEDITPFVELLIEVRARLKKEKKYDLADFIRDELKKQGIILEDTPKGVRWKRV</sequence>